<evidence type="ECO:0000255" key="1">
    <source>
        <dbReference type="HAMAP-Rule" id="MF_00021"/>
    </source>
</evidence>
<comment type="function">
    <text evidence="1">Catalyzes the ATP-dependent transfer of a sulfur to tRNA to produce 4-thiouridine in position 8 of tRNAs, which functions as a near-UV photosensor. Also catalyzes the transfer of sulfur to the sulfur carrier protein ThiS, forming ThiS-thiocarboxylate. This is a step in the synthesis of thiazole, in the thiamine biosynthesis pathway. The sulfur is donated as persulfide by IscS.</text>
</comment>
<comment type="catalytic activity">
    <reaction evidence="1">
        <text>[ThiI sulfur-carrier protein]-S-sulfanyl-L-cysteine + a uridine in tRNA + 2 reduced [2Fe-2S]-[ferredoxin] + ATP + H(+) = [ThiI sulfur-carrier protein]-L-cysteine + a 4-thiouridine in tRNA + 2 oxidized [2Fe-2S]-[ferredoxin] + AMP + diphosphate</text>
        <dbReference type="Rhea" id="RHEA:24176"/>
        <dbReference type="Rhea" id="RHEA-COMP:10000"/>
        <dbReference type="Rhea" id="RHEA-COMP:10001"/>
        <dbReference type="Rhea" id="RHEA-COMP:13337"/>
        <dbReference type="Rhea" id="RHEA-COMP:13338"/>
        <dbReference type="Rhea" id="RHEA-COMP:13339"/>
        <dbReference type="Rhea" id="RHEA-COMP:13340"/>
        <dbReference type="ChEBI" id="CHEBI:15378"/>
        <dbReference type="ChEBI" id="CHEBI:29950"/>
        <dbReference type="ChEBI" id="CHEBI:30616"/>
        <dbReference type="ChEBI" id="CHEBI:33019"/>
        <dbReference type="ChEBI" id="CHEBI:33737"/>
        <dbReference type="ChEBI" id="CHEBI:33738"/>
        <dbReference type="ChEBI" id="CHEBI:61963"/>
        <dbReference type="ChEBI" id="CHEBI:65315"/>
        <dbReference type="ChEBI" id="CHEBI:136798"/>
        <dbReference type="ChEBI" id="CHEBI:456215"/>
        <dbReference type="EC" id="2.8.1.4"/>
    </reaction>
</comment>
<comment type="catalytic activity">
    <reaction evidence="1">
        <text>[ThiS sulfur-carrier protein]-C-terminal Gly-Gly-AMP + S-sulfanyl-L-cysteinyl-[cysteine desulfurase] + AH2 = [ThiS sulfur-carrier protein]-C-terminal-Gly-aminoethanethioate + L-cysteinyl-[cysteine desulfurase] + A + AMP + 2 H(+)</text>
        <dbReference type="Rhea" id="RHEA:43340"/>
        <dbReference type="Rhea" id="RHEA-COMP:12157"/>
        <dbReference type="Rhea" id="RHEA-COMP:12158"/>
        <dbReference type="Rhea" id="RHEA-COMP:12910"/>
        <dbReference type="Rhea" id="RHEA-COMP:19908"/>
        <dbReference type="ChEBI" id="CHEBI:13193"/>
        <dbReference type="ChEBI" id="CHEBI:15378"/>
        <dbReference type="ChEBI" id="CHEBI:17499"/>
        <dbReference type="ChEBI" id="CHEBI:29950"/>
        <dbReference type="ChEBI" id="CHEBI:61963"/>
        <dbReference type="ChEBI" id="CHEBI:90618"/>
        <dbReference type="ChEBI" id="CHEBI:232372"/>
        <dbReference type="ChEBI" id="CHEBI:456215"/>
    </reaction>
</comment>
<comment type="pathway">
    <text evidence="1">Cofactor biosynthesis; thiamine diphosphate biosynthesis.</text>
</comment>
<comment type="subcellular location">
    <subcellularLocation>
        <location evidence="1">Cytoplasm</location>
    </subcellularLocation>
</comment>
<comment type="similarity">
    <text evidence="1">Belongs to the ThiI family.</text>
</comment>
<accession>C4ZAY9</accession>
<organism>
    <name type="scientific">Agathobacter rectalis (strain ATCC 33656 / DSM 3377 / JCM 17463 / KCTC 5835 / VPI 0990)</name>
    <name type="common">Eubacterium rectale</name>
    <dbReference type="NCBI Taxonomy" id="515619"/>
    <lineage>
        <taxon>Bacteria</taxon>
        <taxon>Bacillati</taxon>
        <taxon>Bacillota</taxon>
        <taxon>Clostridia</taxon>
        <taxon>Lachnospirales</taxon>
        <taxon>Lachnospiraceae</taxon>
        <taxon>Agathobacter</taxon>
    </lineage>
</organism>
<sequence length="394" mass="44565">MYKTFLIKYAEIAIKGKNRYIFEDALVKNIKYQLRNVDGSFEVRKESGRVYVETDGDYDYDETVATLSRIFGIVGICPVELHEDEGFDKLCEAVIEHINHVYKDKSFTFKVNARRARKNYPMTSMEINAAVGEKVLEAFPETRVDVHNPQVMINIEIRPMINIYSEEIPGPGGMPLGTAGKAMLLLSGGIDSPVAGYMIAKRGVVINATYFHAPPYTSERAKQKVVDLAKKVARYSGRIKLHVVNFTDIQLAIYEKCPHDELTIIMRRYMMKIAEHFADEDKCLGLITGESIGQVASQTMQSLAATNEVCHMPVYRPLIAMDKNDIIDISNKIDTYETSILPYEDCCTIFVAKHPVTKPNINRIKKSEERLNDVIDELMKTAIDTTEVIMVDAE</sequence>
<keyword id="KW-0067">ATP-binding</keyword>
<keyword id="KW-0963">Cytoplasm</keyword>
<keyword id="KW-0547">Nucleotide-binding</keyword>
<keyword id="KW-0694">RNA-binding</keyword>
<keyword id="KW-0784">Thiamine biosynthesis</keyword>
<keyword id="KW-0808">Transferase</keyword>
<keyword id="KW-0820">tRNA-binding</keyword>
<protein>
    <recommendedName>
        <fullName evidence="1">Probable tRNA sulfurtransferase</fullName>
        <ecNumber evidence="1">2.8.1.4</ecNumber>
    </recommendedName>
    <alternativeName>
        <fullName evidence="1">Sulfur carrier protein ThiS sulfurtransferase</fullName>
    </alternativeName>
    <alternativeName>
        <fullName evidence="1">Thiamine biosynthesis protein ThiI</fullName>
    </alternativeName>
    <alternativeName>
        <fullName evidence="1">tRNA 4-thiouridine synthase</fullName>
    </alternativeName>
</protein>
<feature type="chain" id="PRO_1000201914" description="Probable tRNA sulfurtransferase">
    <location>
        <begin position="1"/>
        <end position="394"/>
    </location>
</feature>
<feature type="domain" description="THUMP" evidence="1">
    <location>
        <begin position="61"/>
        <end position="168"/>
    </location>
</feature>
<feature type="binding site" evidence="1">
    <location>
        <begin position="185"/>
        <end position="186"/>
    </location>
    <ligand>
        <name>ATP</name>
        <dbReference type="ChEBI" id="CHEBI:30616"/>
    </ligand>
</feature>
<feature type="binding site" evidence="1">
    <location>
        <begin position="210"/>
        <end position="211"/>
    </location>
    <ligand>
        <name>ATP</name>
        <dbReference type="ChEBI" id="CHEBI:30616"/>
    </ligand>
</feature>
<feature type="binding site" evidence="1">
    <location>
        <position position="267"/>
    </location>
    <ligand>
        <name>ATP</name>
        <dbReference type="ChEBI" id="CHEBI:30616"/>
    </ligand>
</feature>
<feature type="binding site" evidence="1">
    <location>
        <position position="289"/>
    </location>
    <ligand>
        <name>ATP</name>
        <dbReference type="ChEBI" id="CHEBI:30616"/>
    </ligand>
</feature>
<feature type="binding site" evidence="1">
    <location>
        <position position="298"/>
    </location>
    <ligand>
        <name>ATP</name>
        <dbReference type="ChEBI" id="CHEBI:30616"/>
    </ligand>
</feature>
<name>THII_AGARV</name>
<dbReference type="EC" id="2.8.1.4" evidence="1"/>
<dbReference type="EMBL" id="CP001107">
    <property type="protein sequence ID" value="ACR75644.1"/>
    <property type="molecule type" value="Genomic_DNA"/>
</dbReference>
<dbReference type="RefSeq" id="WP_012742741.1">
    <property type="nucleotide sequence ID" value="NC_012781.1"/>
</dbReference>
<dbReference type="SMR" id="C4ZAY9"/>
<dbReference type="STRING" id="515619.EUBREC_1900"/>
<dbReference type="PaxDb" id="515619-EUBREC_1900"/>
<dbReference type="GeneID" id="86988695"/>
<dbReference type="KEGG" id="ere:EUBREC_1900"/>
<dbReference type="HOGENOM" id="CLU_037952_4_0_9"/>
<dbReference type="UniPathway" id="UPA00060"/>
<dbReference type="Proteomes" id="UP000001477">
    <property type="component" value="Chromosome"/>
</dbReference>
<dbReference type="GO" id="GO:0005829">
    <property type="term" value="C:cytosol"/>
    <property type="evidence" value="ECO:0007669"/>
    <property type="project" value="TreeGrafter"/>
</dbReference>
<dbReference type="GO" id="GO:0005524">
    <property type="term" value="F:ATP binding"/>
    <property type="evidence" value="ECO:0007669"/>
    <property type="project" value="UniProtKB-UniRule"/>
</dbReference>
<dbReference type="GO" id="GO:0004810">
    <property type="term" value="F:CCA tRNA nucleotidyltransferase activity"/>
    <property type="evidence" value="ECO:0007669"/>
    <property type="project" value="InterPro"/>
</dbReference>
<dbReference type="GO" id="GO:0000049">
    <property type="term" value="F:tRNA binding"/>
    <property type="evidence" value="ECO:0007669"/>
    <property type="project" value="UniProtKB-UniRule"/>
</dbReference>
<dbReference type="GO" id="GO:0140741">
    <property type="term" value="F:tRNA-uracil-4 sulfurtransferase activity"/>
    <property type="evidence" value="ECO:0007669"/>
    <property type="project" value="UniProtKB-EC"/>
</dbReference>
<dbReference type="GO" id="GO:0009228">
    <property type="term" value="P:thiamine biosynthetic process"/>
    <property type="evidence" value="ECO:0007669"/>
    <property type="project" value="UniProtKB-KW"/>
</dbReference>
<dbReference type="GO" id="GO:0009229">
    <property type="term" value="P:thiamine diphosphate biosynthetic process"/>
    <property type="evidence" value="ECO:0007669"/>
    <property type="project" value="UniProtKB-UniRule"/>
</dbReference>
<dbReference type="GO" id="GO:0052837">
    <property type="term" value="P:thiazole biosynthetic process"/>
    <property type="evidence" value="ECO:0007669"/>
    <property type="project" value="TreeGrafter"/>
</dbReference>
<dbReference type="GO" id="GO:0002937">
    <property type="term" value="P:tRNA 4-thiouridine biosynthesis"/>
    <property type="evidence" value="ECO:0007669"/>
    <property type="project" value="TreeGrafter"/>
</dbReference>
<dbReference type="CDD" id="cd01712">
    <property type="entry name" value="PPase_ThiI"/>
    <property type="match status" value="1"/>
</dbReference>
<dbReference type="CDD" id="cd11716">
    <property type="entry name" value="THUMP_ThiI"/>
    <property type="match status" value="1"/>
</dbReference>
<dbReference type="FunFam" id="3.40.50.620:FF:000053">
    <property type="entry name" value="Probable tRNA sulfurtransferase"/>
    <property type="match status" value="1"/>
</dbReference>
<dbReference type="Gene3D" id="3.30.2130.30">
    <property type="match status" value="1"/>
</dbReference>
<dbReference type="Gene3D" id="3.40.50.620">
    <property type="entry name" value="HUPs"/>
    <property type="match status" value="1"/>
</dbReference>
<dbReference type="HAMAP" id="MF_00021">
    <property type="entry name" value="ThiI"/>
    <property type="match status" value="1"/>
</dbReference>
<dbReference type="InterPro" id="IPR014729">
    <property type="entry name" value="Rossmann-like_a/b/a_fold"/>
</dbReference>
<dbReference type="InterPro" id="IPR020536">
    <property type="entry name" value="ThiI_AANH"/>
</dbReference>
<dbReference type="InterPro" id="IPR054173">
    <property type="entry name" value="ThiI_fer"/>
</dbReference>
<dbReference type="InterPro" id="IPR049961">
    <property type="entry name" value="ThiI_N"/>
</dbReference>
<dbReference type="InterPro" id="IPR004114">
    <property type="entry name" value="THUMP_dom"/>
</dbReference>
<dbReference type="InterPro" id="IPR049962">
    <property type="entry name" value="THUMP_ThiI"/>
</dbReference>
<dbReference type="InterPro" id="IPR003720">
    <property type="entry name" value="tRNA_STrfase"/>
</dbReference>
<dbReference type="InterPro" id="IPR050102">
    <property type="entry name" value="tRNA_sulfurtransferase_ThiI"/>
</dbReference>
<dbReference type="NCBIfam" id="TIGR00342">
    <property type="entry name" value="tRNA uracil 4-sulfurtransferase ThiI"/>
    <property type="match status" value="1"/>
</dbReference>
<dbReference type="PANTHER" id="PTHR43209">
    <property type="entry name" value="TRNA SULFURTRANSFERASE"/>
    <property type="match status" value="1"/>
</dbReference>
<dbReference type="PANTHER" id="PTHR43209:SF1">
    <property type="entry name" value="TRNA SULFURTRANSFERASE"/>
    <property type="match status" value="1"/>
</dbReference>
<dbReference type="Pfam" id="PF02568">
    <property type="entry name" value="ThiI"/>
    <property type="match status" value="1"/>
</dbReference>
<dbReference type="Pfam" id="PF22025">
    <property type="entry name" value="ThiI_fer"/>
    <property type="match status" value="1"/>
</dbReference>
<dbReference type="Pfam" id="PF02926">
    <property type="entry name" value="THUMP"/>
    <property type="match status" value="1"/>
</dbReference>
<dbReference type="SMART" id="SM00981">
    <property type="entry name" value="THUMP"/>
    <property type="match status" value="1"/>
</dbReference>
<dbReference type="SUPFAM" id="SSF52402">
    <property type="entry name" value="Adenine nucleotide alpha hydrolases-like"/>
    <property type="match status" value="1"/>
</dbReference>
<dbReference type="SUPFAM" id="SSF143437">
    <property type="entry name" value="THUMP domain-like"/>
    <property type="match status" value="1"/>
</dbReference>
<dbReference type="PROSITE" id="PS51165">
    <property type="entry name" value="THUMP"/>
    <property type="match status" value="1"/>
</dbReference>
<reference key="1">
    <citation type="journal article" date="2009" name="Proc. Natl. Acad. Sci. U.S.A.">
        <title>Characterizing a model human gut microbiota composed of members of its two dominant bacterial phyla.</title>
        <authorList>
            <person name="Mahowald M.A."/>
            <person name="Rey F.E."/>
            <person name="Seedorf H."/>
            <person name="Turnbaugh P.J."/>
            <person name="Fulton R.S."/>
            <person name="Wollam A."/>
            <person name="Shah N."/>
            <person name="Wang C."/>
            <person name="Magrini V."/>
            <person name="Wilson R.K."/>
            <person name="Cantarel B.L."/>
            <person name="Coutinho P.M."/>
            <person name="Henrissat B."/>
            <person name="Crock L.W."/>
            <person name="Russell A."/>
            <person name="Verberkmoes N.C."/>
            <person name="Hettich R.L."/>
            <person name="Gordon J.I."/>
        </authorList>
    </citation>
    <scope>NUCLEOTIDE SEQUENCE [LARGE SCALE GENOMIC DNA]</scope>
    <source>
        <strain>ATCC 33656 / DSM 3377 / JCM 17463 / KCTC 5835 / LMG 30912 / VPI 0990</strain>
    </source>
</reference>
<proteinExistence type="inferred from homology"/>
<gene>
    <name evidence="1" type="primary">thiI</name>
    <name type="ordered locus">EUBREC_1900</name>
</gene>